<accession>Q75JK0</accession>
<accession>Q552C7</accession>
<accession>Q9U478</accession>
<organism>
    <name type="scientific">Dictyostelium discoideum</name>
    <name type="common">Social amoeba</name>
    <dbReference type="NCBI Taxonomy" id="44689"/>
    <lineage>
        <taxon>Eukaryota</taxon>
        <taxon>Amoebozoa</taxon>
        <taxon>Evosea</taxon>
        <taxon>Eumycetozoa</taxon>
        <taxon>Dictyostelia</taxon>
        <taxon>Dictyosteliales</taxon>
        <taxon>Dictyosteliaceae</taxon>
        <taxon>Dictyostelium</taxon>
    </lineage>
</organism>
<sequence length="781" mass="89690">MHYHNKDDWEEISFIGEGQYGRVIKCRKKNGFILNEQVDYVAIKIISKDKFKRNETDILEKIRLFNIPRYYSHAEDDNFIYIYMEYIEGENLANILKTKKQGRFKESRIISMIADLVETLSFLHKHHVIHRDIKTANLVLDKNKNLKLIDFGASTIQNKKQFEQYLNETTNNNNNPNNNNNNNNNNNNNNNNNNNNNNNNNNINNINNNNDLNGSGSGISTYLNEQYKQSSFAIIGTFNYMAPEVKRNYRATRKSDVWSLGCTIIEMAGGDLSQKLNGIPIIPDHLSDTLKDFLNHCLVIDPKKRSYMEELLSHKLIVHIIGPNKSKNYGVEPKFKDDDDFEEIENEKDNYLSSRFPAKFAPQYEKPKWEIEFEELEFDKDDSEGGAGNFGDVKKGLLNETEVAIKFVKKAHCEAITVCDTFYHEVLILSNLRHPNIVQFMAACIKYGEKETNHCIVSEWMSGGNLTQFLMNNHKVLENNPHLRVKLLTDIAKGILYLHKQHIIHRDLTSNNVLLDFKREILPNQLYGSNEFTAKVCDFGLSSNQSESKKLRGGSIHYMAPENLNGSPINEKSDIYSFGLLVWQMFSYAPPNTIYSPKEMASMVSDPKQNYRPQIPFNVPLKFKELITQCWDRNPLNRPKDFSIIIEKLKEIGLTYNRSSSNVSPINSPLINNNNNNYNNNHLNSLSSSLNSSPTYYAKTFGDSNSNIDVYHSADSITPIVSSPPIIKIDLTQDDWDSKLKQLDLEHENKSLISISINDNNNNNINNNNTNNNNVNDLGYC</sequence>
<dbReference type="EC" id="2.7.12.1"/>
<dbReference type="EMBL" id="AAFI02000014">
    <property type="protein sequence ID" value="EAL69312.1"/>
    <property type="molecule type" value="Genomic_DNA"/>
</dbReference>
<dbReference type="EMBL" id="AF200688">
    <property type="protein sequence ID" value="AAF14631.1"/>
    <property type="molecule type" value="mRNA"/>
</dbReference>
<dbReference type="RefSeq" id="XP_643301.1">
    <property type="nucleotide sequence ID" value="XM_638209.1"/>
</dbReference>
<dbReference type="SMR" id="Q75JK0"/>
<dbReference type="FunCoup" id="Q75JK0">
    <property type="interactions" value="1"/>
</dbReference>
<dbReference type="STRING" id="44689.Q75JK0"/>
<dbReference type="PaxDb" id="44689-DDB0185184"/>
<dbReference type="EnsemblProtists" id="EAL69312">
    <property type="protein sequence ID" value="EAL69312"/>
    <property type="gene ID" value="DDB_G0276025"/>
</dbReference>
<dbReference type="GeneID" id="8620347"/>
<dbReference type="KEGG" id="ddi:DDB_G0276025"/>
<dbReference type="dictyBase" id="DDB_G0276025">
    <property type="gene designation" value="zakA"/>
</dbReference>
<dbReference type="VEuPathDB" id="AmoebaDB:DDB_G0276025"/>
<dbReference type="eggNOG" id="KOG0192">
    <property type="taxonomic scope" value="Eukaryota"/>
</dbReference>
<dbReference type="eggNOG" id="KOG4645">
    <property type="taxonomic scope" value="Eukaryota"/>
</dbReference>
<dbReference type="HOGENOM" id="CLU_431134_0_0_1"/>
<dbReference type="InParanoid" id="Q75JK0"/>
<dbReference type="OMA" id="TIKICKI"/>
<dbReference type="PhylomeDB" id="Q75JK0"/>
<dbReference type="Reactome" id="R-DDI-5675482">
    <property type="pathway name" value="Regulation of necroptotic cell death"/>
</dbReference>
<dbReference type="PRO" id="PR:Q75JK0"/>
<dbReference type="Proteomes" id="UP000002195">
    <property type="component" value="Chromosome 2"/>
</dbReference>
<dbReference type="GO" id="GO:0097515">
    <property type="term" value="C:asexual spore wall"/>
    <property type="evidence" value="ECO:0000314"/>
    <property type="project" value="dictyBase"/>
</dbReference>
<dbReference type="GO" id="GO:0005737">
    <property type="term" value="C:cytoplasm"/>
    <property type="evidence" value="ECO:0000318"/>
    <property type="project" value="GO_Central"/>
</dbReference>
<dbReference type="GO" id="GO:0005524">
    <property type="term" value="F:ATP binding"/>
    <property type="evidence" value="ECO:0007669"/>
    <property type="project" value="UniProtKB-KW"/>
</dbReference>
<dbReference type="GO" id="GO:0004691">
    <property type="term" value="F:cAMP-dependent protein kinase activity"/>
    <property type="evidence" value="ECO:0000315"/>
    <property type="project" value="UniProtKB"/>
</dbReference>
<dbReference type="GO" id="GO:0004672">
    <property type="term" value="F:protein kinase activity"/>
    <property type="evidence" value="ECO:0000318"/>
    <property type="project" value="GO_Central"/>
</dbReference>
<dbReference type="GO" id="GO:0106310">
    <property type="term" value="F:protein serine kinase activity"/>
    <property type="evidence" value="ECO:0007669"/>
    <property type="project" value="RHEA"/>
</dbReference>
<dbReference type="GO" id="GO:0004712">
    <property type="term" value="F:protein serine/threonine/tyrosine kinase activity"/>
    <property type="evidence" value="ECO:0000314"/>
    <property type="project" value="dictyBase"/>
</dbReference>
<dbReference type="GO" id="GO:0004713">
    <property type="term" value="F:protein tyrosine kinase activity"/>
    <property type="evidence" value="ECO:0000314"/>
    <property type="project" value="dictyBase"/>
</dbReference>
<dbReference type="GO" id="GO:0140582">
    <property type="term" value="P:adenylate cyclase-activating G protein-coupled cAMP receptor signaling pathway"/>
    <property type="evidence" value="ECO:0000315"/>
    <property type="project" value="UniProtKB"/>
</dbReference>
<dbReference type="GO" id="GO:0019933">
    <property type="term" value="P:cAMP-mediated signaling"/>
    <property type="evidence" value="ECO:0000314"/>
    <property type="project" value="dictyBase"/>
</dbReference>
<dbReference type="GO" id="GO:0001708">
    <property type="term" value="P:cell fate specification"/>
    <property type="evidence" value="ECO:0000315"/>
    <property type="project" value="UniProtKB"/>
</dbReference>
<dbReference type="GO" id="GO:0033674">
    <property type="term" value="P:positive regulation of kinase activity"/>
    <property type="evidence" value="ECO:0000315"/>
    <property type="project" value="UniProtKB"/>
</dbReference>
<dbReference type="GO" id="GO:0060176">
    <property type="term" value="P:regulation of aggregation involved in sorocarp development"/>
    <property type="evidence" value="ECO:0000315"/>
    <property type="project" value="dictyBase"/>
</dbReference>
<dbReference type="GO" id="GO:0042659">
    <property type="term" value="P:regulation of cell fate specification"/>
    <property type="evidence" value="ECO:0000315"/>
    <property type="project" value="dictyBase"/>
</dbReference>
<dbReference type="GO" id="GO:0061118">
    <property type="term" value="P:regulation of positive chemotaxis to cAMP"/>
    <property type="evidence" value="ECO:0000315"/>
    <property type="project" value="dictyBase"/>
</dbReference>
<dbReference type="GO" id="GO:0007165">
    <property type="term" value="P:signal transduction"/>
    <property type="evidence" value="ECO:0000318"/>
    <property type="project" value="GO_Central"/>
</dbReference>
<dbReference type="GO" id="GO:0031288">
    <property type="term" value="P:sorocarp morphogenesis"/>
    <property type="evidence" value="ECO:0000315"/>
    <property type="project" value="dictyBase"/>
</dbReference>
<dbReference type="GO" id="GO:0030435">
    <property type="term" value="P:sporulation resulting in formation of a cellular spore"/>
    <property type="evidence" value="ECO:0000315"/>
    <property type="project" value="dictyBase"/>
</dbReference>
<dbReference type="CDD" id="cd13999">
    <property type="entry name" value="STKc_MAP3K-like"/>
    <property type="match status" value="1"/>
</dbReference>
<dbReference type="FunFam" id="1.10.510.10:FF:001915">
    <property type="entry name" value="Dual specificity protein kinase zak2"/>
    <property type="match status" value="1"/>
</dbReference>
<dbReference type="Gene3D" id="3.30.200.20">
    <property type="entry name" value="Phosphorylase Kinase, domain 1"/>
    <property type="match status" value="1"/>
</dbReference>
<dbReference type="Gene3D" id="1.10.510.10">
    <property type="entry name" value="Transferase(Phosphotransferase) domain 1"/>
    <property type="match status" value="3"/>
</dbReference>
<dbReference type="InterPro" id="IPR011009">
    <property type="entry name" value="Kinase-like_dom_sf"/>
</dbReference>
<dbReference type="InterPro" id="IPR000719">
    <property type="entry name" value="Prot_kinase_dom"/>
</dbReference>
<dbReference type="InterPro" id="IPR017441">
    <property type="entry name" value="Protein_kinase_ATP_BS"/>
</dbReference>
<dbReference type="InterPro" id="IPR001245">
    <property type="entry name" value="Ser-Thr/Tyr_kinase_cat_dom"/>
</dbReference>
<dbReference type="InterPro" id="IPR008271">
    <property type="entry name" value="Ser/Thr_kinase_AS"/>
</dbReference>
<dbReference type="InterPro" id="IPR051681">
    <property type="entry name" value="Ser/Thr_Kinases-Pseudokinases"/>
</dbReference>
<dbReference type="InterPro" id="IPR008266">
    <property type="entry name" value="Tyr_kinase_AS"/>
</dbReference>
<dbReference type="PANTHER" id="PTHR44329:SF298">
    <property type="entry name" value="MIXED LINEAGE KINASE DOMAIN-LIKE PROTEIN"/>
    <property type="match status" value="1"/>
</dbReference>
<dbReference type="PANTHER" id="PTHR44329">
    <property type="entry name" value="SERINE/THREONINE-PROTEIN KINASE TNNI3K-RELATED"/>
    <property type="match status" value="1"/>
</dbReference>
<dbReference type="Pfam" id="PF07714">
    <property type="entry name" value="PK_Tyr_Ser-Thr"/>
    <property type="match status" value="1"/>
</dbReference>
<dbReference type="Pfam" id="PF00069">
    <property type="entry name" value="Pkinase"/>
    <property type="match status" value="2"/>
</dbReference>
<dbReference type="PRINTS" id="PR00109">
    <property type="entry name" value="TYRKINASE"/>
</dbReference>
<dbReference type="SMART" id="SM00220">
    <property type="entry name" value="S_TKc"/>
    <property type="match status" value="2"/>
</dbReference>
<dbReference type="SUPFAM" id="SSF56112">
    <property type="entry name" value="Protein kinase-like (PK-like)"/>
    <property type="match status" value="2"/>
</dbReference>
<dbReference type="PROSITE" id="PS00107">
    <property type="entry name" value="PROTEIN_KINASE_ATP"/>
    <property type="match status" value="1"/>
</dbReference>
<dbReference type="PROSITE" id="PS50011">
    <property type="entry name" value="PROTEIN_KINASE_DOM"/>
    <property type="match status" value="2"/>
</dbReference>
<dbReference type="PROSITE" id="PS00108">
    <property type="entry name" value="PROTEIN_KINASE_ST"/>
    <property type="match status" value="1"/>
</dbReference>
<dbReference type="PROSITE" id="PS00109">
    <property type="entry name" value="PROTEIN_KINASE_TYR"/>
    <property type="match status" value="1"/>
</dbReference>
<proteinExistence type="evidence at protein level"/>
<feature type="chain" id="PRO_0000328187" description="Dual specificity protein kinase zakA">
    <location>
        <begin position="1"/>
        <end position="781"/>
    </location>
</feature>
<feature type="domain" description="Protein kinase 1" evidence="2">
    <location>
        <begin position="9"/>
        <end position="317"/>
    </location>
</feature>
<feature type="domain" description="Protein kinase 2" evidence="2">
    <location>
        <begin position="379"/>
        <end position="654"/>
    </location>
</feature>
<feature type="region of interest" description="Disordered" evidence="3">
    <location>
        <begin position="168"/>
        <end position="209"/>
    </location>
</feature>
<feature type="compositionally biased region" description="Low complexity" evidence="3">
    <location>
        <begin position="171"/>
        <end position="209"/>
    </location>
</feature>
<feature type="active site" description="Proton acceptor" evidence="1">
    <location>
        <position position="132"/>
    </location>
</feature>
<feature type="active site" description="Proton acceptor" evidence="1">
    <location>
        <position position="507"/>
    </location>
</feature>
<feature type="binding site" evidence="2">
    <location>
        <begin position="15"/>
        <end position="23"/>
    </location>
    <ligand>
        <name>ATP</name>
        <dbReference type="ChEBI" id="CHEBI:30616"/>
    </ligand>
</feature>
<feature type="binding site" evidence="2">
    <location>
        <position position="44"/>
    </location>
    <ligand>
        <name>ATP</name>
        <dbReference type="ChEBI" id="CHEBI:30616"/>
    </ligand>
</feature>
<feature type="binding site" evidence="2">
    <location>
        <begin position="385"/>
        <end position="393"/>
    </location>
    <ligand>
        <name>ATP</name>
        <dbReference type="ChEBI" id="CHEBI:30616"/>
    </ligand>
</feature>
<feature type="binding site" evidence="2">
    <location>
        <position position="406"/>
    </location>
    <ligand>
        <name>ATP</name>
        <dbReference type="ChEBI" id="CHEBI:30616"/>
    </ligand>
</feature>
<feature type="sequence conflict" description="In Ref. 3; AAF14631." evidence="7" ref="3">
    <original>G</original>
    <variation>S</variation>
    <location>
        <position position="261"/>
    </location>
</feature>
<feature type="sequence conflict" description="In Ref. 3; AAF14631." evidence="7" ref="3">
    <original>D</original>
    <variation>G</variation>
    <location>
        <position position="759"/>
    </location>
</feature>
<evidence type="ECO:0000250" key="1"/>
<evidence type="ECO:0000255" key="2">
    <source>
        <dbReference type="PROSITE-ProRule" id="PRU00159"/>
    </source>
</evidence>
<evidence type="ECO:0000256" key="3">
    <source>
        <dbReference type="SAM" id="MobiDB-lite"/>
    </source>
</evidence>
<evidence type="ECO:0000269" key="4">
    <source>
    </source>
</evidence>
<evidence type="ECO:0000269" key="5">
    <source>
    </source>
</evidence>
<evidence type="ECO:0000269" key="6">
    <source>
    </source>
</evidence>
<evidence type="ECO:0000305" key="7"/>
<name>ZAK1_DICDI</name>
<gene>
    <name type="primary">zakA</name>
    <name type="synonym">zak1</name>
    <name type="ORF">DDB_G0276025</name>
</gene>
<reference key="1">
    <citation type="journal article" date="2002" name="Nature">
        <title>Sequence and analysis of chromosome 2 of Dictyostelium discoideum.</title>
        <authorList>
            <person name="Gloeckner G."/>
            <person name="Eichinger L."/>
            <person name="Szafranski K."/>
            <person name="Pachebat J.A."/>
            <person name="Bankier A.T."/>
            <person name="Dear P.H."/>
            <person name="Lehmann R."/>
            <person name="Baumgart C."/>
            <person name="Parra G."/>
            <person name="Abril J.F."/>
            <person name="Guigo R."/>
            <person name="Kumpf K."/>
            <person name="Tunggal B."/>
            <person name="Cox E.C."/>
            <person name="Quail M.A."/>
            <person name="Platzer M."/>
            <person name="Rosenthal A."/>
            <person name="Noegel A.A."/>
        </authorList>
    </citation>
    <scope>NUCLEOTIDE SEQUENCE [LARGE SCALE GENOMIC DNA]</scope>
    <source>
        <strain>AX4</strain>
    </source>
</reference>
<reference key="2">
    <citation type="journal article" date="2005" name="Nature">
        <title>The genome of the social amoeba Dictyostelium discoideum.</title>
        <authorList>
            <person name="Eichinger L."/>
            <person name="Pachebat J.A."/>
            <person name="Gloeckner G."/>
            <person name="Rajandream M.A."/>
            <person name="Sucgang R."/>
            <person name="Berriman M."/>
            <person name="Song J."/>
            <person name="Olsen R."/>
            <person name="Szafranski K."/>
            <person name="Xu Q."/>
            <person name="Tunggal B."/>
            <person name="Kummerfeld S."/>
            <person name="Madera M."/>
            <person name="Konfortov B.A."/>
            <person name="Rivero F."/>
            <person name="Bankier A.T."/>
            <person name="Lehmann R."/>
            <person name="Hamlin N."/>
            <person name="Davies R."/>
            <person name="Gaudet P."/>
            <person name="Fey P."/>
            <person name="Pilcher K."/>
            <person name="Chen G."/>
            <person name="Saunders D."/>
            <person name="Sodergren E.J."/>
            <person name="Davis P."/>
            <person name="Kerhornou A."/>
            <person name="Nie X."/>
            <person name="Hall N."/>
            <person name="Anjard C."/>
            <person name="Hemphill L."/>
            <person name="Bason N."/>
            <person name="Farbrother P."/>
            <person name="Desany B."/>
            <person name="Just E."/>
            <person name="Morio T."/>
            <person name="Rost R."/>
            <person name="Churcher C.M."/>
            <person name="Cooper J."/>
            <person name="Haydock S."/>
            <person name="van Driessche N."/>
            <person name="Cronin A."/>
            <person name="Goodhead I."/>
            <person name="Muzny D.M."/>
            <person name="Mourier T."/>
            <person name="Pain A."/>
            <person name="Lu M."/>
            <person name="Harper D."/>
            <person name="Lindsay R."/>
            <person name="Hauser H."/>
            <person name="James K.D."/>
            <person name="Quiles M."/>
            <person name="Madan Babu M."/>
            <person name="Saito T."/>
            <person name="Buchrieser C."/>
            <person name="Wardroper A."/>
            <person name="Felder M."/>
            <person name="Thangavelu M."/>
            <person name="Johnson D."/>
            <person name="Knights A."/>
            <person name="Loulseged H."/>
            <person name="Mungall K.L."/>
            <person name="Oliver K."/>
            <person name="Price C."/>
            <person name="Quail M.A."/>
            <person name="Urushihara H."/>
            <person name="Hernandez J."/>
            <person name="Rabbinowitsch E."/>
            <person name="Steffen D."/>
            <person name="Sanders M."/>
            <person name="Ma J."/>
            <person name="Kohara Y."/>
            <person name="Sharp S."/>
            <person name="Simmonds M.N."/>
            <person name="Spiegler S."/>
            <person name="Tivey A."/>
            <person name="Sugano S."/>
            <person name="White B."/>
            <person name="Walker D."/>
            <person name="Woodward J.R."/>
            <person name="Winckler T."/>
            <person name="Tanaka Y."/>
            <person name="Shaulsky G."/>
            <person name="Schleicher M."/>
            <person name="Weinstock G.M."/>
            <person name="Rosenthal A."/>
            <person name="Cox E.C."/>
            <person name="Chisholm R.L."/>
            <person name="Gibbs R.A."/>
            <person name="Loomis W.F."/>
            <person name="Platzer M."/>
            <person name="Kay R.R."/>
            <person name="Williams J.G."/>
            <person name="Dear P.H."/>
            <person name="Noegel A.A."/>
            <person name="Barrell B.G."/>
            <person name="Kuspa A."/>
        </authorList>
    </citation>
    <scope>NUCLEOTIDE SEQUENCE [LARGE SCALE GENOMIC DNA]</scope>
    <source>
        <strain>AX4</strain>
    </source>
</reference>
<reference key="3">
    <citation type="journal article" date="1999" name="Cell">
        <title>The novel tyrosine kinase ZAK1 activates GSK3 to direct cell fate specification.</title>
        <authorList>
            <person name="Kim L."/>
            <person name="Liu J."/>
            <person name="Kimmel A.R."/>
        </authorList>
    </citation>
    <scope>NUCLEOTIDE SEQUENCE [MRNA] OF 1-759</scope>
    <scope>FUNCTION</scope>
    <scope>DEVELOPMENTAL STAGE</scope>
    <scope>AUTOPHOSPHORYLATION</scope>
</reference>
<reference key="4">
    <citation type="journal article" date="2007" name="Eukaryot. Cell">
        <title>Proteomic and microarray analyses of the Dictyostelium Zak1-GSK-3 signaling pathway reveal a role in early development.</title>
        <authorList>
            <person name="Strmecki L."/>
            <person name="Bloomfield G."/>
            <person name="Araki T."/>
            <person name="Dalton E."/>
            <person name="Skelton J."/>
            <person name="Schilde C."/>
            <person name="Harwood A."/>
            <person name="Williams J.G."/>
            <person name="Ivens A."/>
            <person name="Pears C."/>
        </authorList>
    </citation>
    <scope>FUNCTION</scope>
</reference>
<reference key="5">
    <citation type="journal article" date="2011" name="Development">
        <title>Combinatorial cell-specific regulation of GSK3 directs cell differentiation and polarity in Dictyostelium.</title>
        <authorList>
            <person name="Kim L."/>
            <person name="Brzostowski J."/>
            <person name="Majithia A."/>
            <person name="Lee N.S."/>
            <person name="McMains V."/>
            <person name="Kimmel A.R."/>
        </authorList>
    </citation>
    <scope>FUNCTION</scope>
    <scope>TISSUE SPECIFICITY</scope>
</reference>
<keyword id="KW-0067">ATP-binding</keyword>
<keyword id="KW-0217">Developmental protein</keyword>
<keyword id="KW-0418">Kinase</keyword>
<keyword id="KW-0547">Nucleotide-binding</keyword>
<keyword id="KW-0597">Phosphoprotein</keyword>
<keyword id="KW-1185">Reference proteome</keyword>
<keyword id="KW-0677">Repeat</keyword>
<keyword id="KW-0723">Serine/threonine-protein kinase</keyword>
<keyword id="KW-0808">Transferase</keyword>
<keyword id="KW-0829">Tyrosine-protein kinase</keyword>
<protein>
    <recommendedName>
        <fullName>Dual specificity protein kinase zakA</fullName>
        <ecNumber>2.7.12.1</ecNumber>
    </recommendedName>
    <alternativeName>
        <fullName>Zaphod K Kinase 1</fullName>
        <shortName>Zaphod kinase 1</shortName>
    </alternativeName>
    <alternativeName>
        <fullName>Zaphod kinase A</fullName>
    </alternativeName>
</protein>
<comment type="function">
    <text evidence="4 5 6">Positive regulator of gsk3/gskA activity required for cell pattern formation and a downstream effector of carC. The kinases, gsk3/gskA, zakA and zak2, form part of a signaling pathway that responds to extracellular cyclic AMP. The pathway has a role in transcriptional regulation; required to direct prespore/spore fates during development. ZakA negatively regulates prestalk differentiation by regulating expression of ecmB. Phosphorylates Y-214 of gsk3/gskA, in vitro.</text>
</comment>
<comment type="catalytic activity">
    <reaction>
        <text>L-seryl-[protein] + ATP = O-phospho-L-seryl-[protein] + ADP + H(+)</text>
        <dbReference type="Rhea" id="RHEA:17989"/>
        <dbReference type="Rhea" id="RHEA-COMP:9863"/>
        <dbReference type="Rhea" id="RHEA-COMP:11604"/>
        <dbReference type="ChEBI" id="CHEBI:15378"/>
        <dbReference type="ChEBI" id="CHEBI:29999"/>
        <dbReference type="ChEBI" id="CHEBI:30616"/>
        <dbReference type="ChEBI" id="CHEBI:83421"/>
        <dbReference type="ChEBI" id="CHEBI:456216"/>
        <dbReference type="EC" id="2.7.12.1"/>
    </reaction>
</comment>
<comment type="catalytic activity">
    <reaction>
        <text>L-threonyl-[protein] + ATP = O-phospho-L-threonyl-[protein] + ADP + H(+)</text>
        <dbReference type="Rhea" id="RHEA:46608"/>
        <dbReference type="Rhea" id="RHEA-COMP:11060"/>
        <dbReference type="Rhea" id="RHEA-COMP:11605"/>
        <dbReference type="ChEBI" id="CHEBI:15378"/>
        <dbReference type="ChEBI" id="CHEBI:30013"/>
        <dbReference type="ChEBI" id="CHEBI:30616"/>
        <dbReference type="ChEBI" id="CHEBI:61977"/>
        <dbReference type="ChEBI" id="CHEBI:456216"/>
        <dbReference type="EC" id="2.7.12.1"/>
    </reaction>
</comment>
<comment type="catalytic activity">
    <reaction>
        <text>L-tyrosyl-[protein] + ATP = O-phospho-L-tyrosyl-[protein] + ADP + H(+)</text>
        <dbReference type="Rhea" id="RHEA:10596"/>
        <dbReference type="Rhea" id="RHEA-COMP:10136"/>
        <dbReference type="Rhea" id="RHEA-COMP:20101"/>
        <dbReference type="ChEBI" id="CHEBI:15378"/>
        <dbReference type="ChEBI" id="CHEBI:30616"/>
        <dbReference type="ChEBI" id="CHEBI:46858"/>
        <dbReference type="ChEBI" id="CHEBI:61978"/>
        <dbReference type="ChEBI" id="CHEBI:456216"/>
        <dbReference type="EC" id="2.7.12.1"/>
    </reaction>
</comment>
<comment type="tissue specificity">
    <text evidence="6">ZakA and zak2 are coexpressed in prestalk cell population, zakA is enriched in pstB populations and zak1 in pstA populations. ZakA and zak2 are coexpressed in prespore cells, zakA expression levels are 10 fold higher than zak2.</text>
</comment>
<comment type="developmental stage">
    <text evidence="4">Expression is first seen at 5 hours of development during aggregation, reaching peak expression at slug stage (15 hours).</text>
</comment>
<comment type="PTM">
    <text>N-terminal serine/threonine domain is capable of autophosphorylation, in vitro, but to a lower extent than the tyrosine kinase domain. May function as a negative regulator of the tyrosine kinase domain.</text>
</comment>
<comment type="PTM">
    <text>C-terminal tyrosine kinase domain is capable of autophosphorylation, in vitro.</text>
</comment>
<comment type="miscellaneous">
    <text>'Zaphod' is a fictional ex-president of the galaxy with 2 heads.</text>
</comment>
<comment type="similarity">
    <text evidence="7">In the N-terminal section; belongs to the protein kinase superfamily. Ser/Thr protein kinase family.</text>
</comment>
<comment type="similarity">
    <text evidence="7">In the C-terminal section; belongs to the protein kinase superfamily. TKL Tyr protein kinase family.</text>
</comment>